<gene>
    <name evidence="1" type="primary">uppP2</name>
    <name type="synonym">bacA2</name>
    <name type="synonym">upk2</name>
    <name type="ordered locus">BC_1384</name>
</gene>
<proteinExistence type="inferred from homology"/>
<organism>
    <name type="scientific">Bacillus cereus (strain ATCC 14579 / DSM 31 / CCUG 7414 / JCM 2152 / NBRC 15305 / NCIMB 9373 / NCTC 2599 / NRRL B-3711)</name>
    <dbReference type="NCBI Taxonomy" id="226900"/>
    <lineage>
        <taxon>Bacteria</taxon>
        <taxon>Bacillati</taxon>
        <taxon>Bacillota</taxon>
        <taxon>Bacilli</taxon>
        <taxon>Bacillales</taxon>
        <taxon>Bacillaceae</taxon>
        <taxon>Bacillus</taxon>
        <taxon>Bacillus cereus group</taxon>
    </lineage>
</organism>
<dbReference type="EC" id="3.6.1.27" evidence="1"/>
<dbReference type="EMBL" id="AE016877">
    <property type="protein sequence ID" value="AAP08366.1"/>
    <property type="molecule type" value="Genomic_DNA"/>
</dbReference>
<dbReference type="RefSeq" id="NP_831165.1">
    <property type="nucleotide sequence ID" value="NC_004722.1"/>
</dbReference>
<dbReference type="RefSeq" id="WP_000796255.1">
    <property type="nucleotide sequence ID" value="NC_004722.1"/>
</dbReference>
<dbReference type="SMR" id="Q81G27"/>
<dbReference type="STRING" id="226900.BC_1384"/>
<dbReference type="DNASU" id="1203733"/>
<dbReference type="KEGG" id="bce:BC1384"/>
<dbReference type="PATRIC" id="fig|226900.8.peg.1358"/>
<dbReference type="HOGENOM" id="CLU_060296_2_0_9"/>
<dbReference type="OrthoDB" id="9808289at2"/>
<dbReference type="Proteomes" id="UP000001417">
    <property type="component" value="Chromosome"/>
</dbReference>
<dbReference type="GO" id="GO:0005886">
    <property type="term" value="C:plasma membrane"/>
    <property type="evidence" value="ECO:0000318"/>
    <property type="project" value="GO_Central"/>
</dbReference>
<dbReference type="GO" id="GO:0050380">
    <property type="term" value="F:undecaprenyl-diphosphatase activity"/>
    <property type="evidence" value="ECO:0000318"/>
    <property type="project" value="GO_Central"/>
</dbReference>
<dbReference type="GO" id="GO:0071555">
    <property type="term" value="P:cell wall organization"/>
    <property type="evidence" value="ECO:0007669"/>
    <property type="project" value="UniProtKB-KW"/>
</dbReference>
<dbReference type="GO" id="GO:0009252">
    <property type="term" value="P:peptidoglycan biosynthetic process"/>
    <property type="evidence" value="ECO:0007669"/>
    <property type="project" value="UniProtKB-KW"/>
</dbReference>
<dbReference type="GO" id="GO:0000270">
    <property type="term" value="P:peptidoglycan metabolic process"/>
    <property type="evidence" value="ECO:0000318"/>
    <property type="project" value="GO_Central"/>
</dbReference>
<dbReference type="GO" id="GO:0008360">
    <property type="term" value="P:regulation of cell shape"/>
    <property type="evidence" value="ECO:0007669"/>
    <property type="project" value="UniProtKB-KW"/>
</dbReference>
<dbReference type="GO" id="GO:0046677">
    <property type="term" value="P:response to antibiotic"/>
    <property type="evidence" value="ECO:0007669"/>
    <property type="project" value="UniProtKB-UniRule"/>
</dbReference>
<dbReference type="HAMAP" id="MF_01006">
    <property type="entry name" value="Undec_diphosphatase"/>
    <property type="match status" value="1"/>
</dbReference>
<dbReference type="InterPro" id="IPR003824">
    <property type="entry name" value="UppP"/>
</dbReference>
<dbReference type="NCBIfam" id="NF001388">
    <property type="entry name" value="PRK00281.1-1"/>
    <property type="match status" value="1"/>
</dbReference>
<dbReference type="NCBIfam" id="NF001389">
    <property type="entry name" value="PRK00281.1-2"/>
    <property type="match status" value="1"/>
</dbReference>
<dbReference type="NCBIfam" id="NF001390">
    <property type="entry name" value="PRK00281.1-4"/>
    <property type="match status" value="1"/>
</dbReference>
<dbReference type="NCBIfam" id="TIGR00753">
    <property type="entry name" value="undec_PP_bacA"/>
    <property type="match status" value="1"/>
</dbReference>
<dbReference type="PANTHER" id="PTHR30622">
    <property type="entry name" value="UNDECAPRENYL-DIPHOSPHATASE"/>
    <property type="match status" value="1"/>
</dbReference>
<dbReference type="PANTHER" id="PTHR30622:SF3">
    <property type="entry name" value="UNDECAPRENYL-DIPHOSPHATASE"/>
    <property type="match status" value="1"/>
</dbReference>
<dbReference type="Pfam" id="PF02673">
    <property type="entry name" value="BacA"/>
    <property type="match status" value="1"/>
</dbReference>
<protein>
    <recommendedName>
        <fullName evidence="1">Undecaprenyl-diphosphatase 2</fullName>
        <ecNumber evidence="1">3.6.1.27</ecNumber>
    </recommendedName>
    <alternativeName>
        <fullName evidence="1">Bacitracin resistance protein 2</fullName>
    </alternativeName>
    <alternativeName>
        <fullName evidence="1">Undecaprenyl pyrophosphate phosphatase 2</fullName>
    </alternativeName>
</protein>
<comment type="function">
    <text evidence="1">Catalyzes the dephosphorylation of undecaprenyl diphosphate (UPP). Confers resistance to bacitracin.</text>
</comment>
<comment type="catalytic activity">
    <reaction evidence="1">
        <text>di-trans,octa-cis-undecaprenyl diphosphate + H2O = di-trans,octa-cis-undecaprenyl phosphate + phosphate + H(+)</text>
        <dbReference type="Rhea" id="RHEA:28094"/>
        <dbReference type="ChEBI" id="CHEBI:15377"/>
        <dbReference type="ChEBI" id="CHEBI:15378"/>
        <dbReference type="ChEBI" id="CHEBI:43474"/>
        <dbReference type="ChEBI" id="CHEBI:58405"/>
        <dbReference type="ChEBI" id="CHEBI:60392"/>
        <dbReference type="EC" id="3.6.1.27"/>
    </reaction>
</comment>
<comment type="subcellular location">
    <subcellularLocation>
        <location evidence="1">Cell membrane</location>
        <topology evidence="1">Multi-pass membrane protein</topology>
    </subcellularLocation>
</comment>
<comment type="miscellaneous">
    <text>Bacitracin is thought to be involved in the inhibition of peptidoglycan synthesis by sequestering undecaprenyl diphosphate, thereby reducing the pool of lipid carrier available.</text>
</comment>
<comment type="similarity">
    <text evidence="1">Belongs to the UppP family.</text>
</comment>
<sequence length="263" mass="28355">MADWLIGLIMGAVEGLTEFLPVSSTGHMILTGHLIGFDDERAKVFEVVIQLGSILAVVVIFWKRLWSLVGIGKVTDGPSLNLLHIIIGMIPAGVLGVLFHSTIKEGLFGPGPVVISLVAGGILMIVAEKFSKPSTARTLDEITYKQAFTIGMFQCLALWPGFSRSGSTISGGLLARVSHTAAAEYTFILAVPMMVAASGLDLIKSWDVLSSADITLFVTGFVTAFVVAMLAIVSFLKLLSRVKLTPFAYYRFILAAVFYFFIM</sequence>
<reference key="1">
    <citation type="journal article" date="2003" name="Nature">
        <title>Genome sequence of Bacillus cereus and comparative analysis with Bacillus anthracis.</title>
        <authorList>
            <person name="Ivanova N."/>
            <person name="Sorokin A."/>
            <person name="Anderson I."/>
            <person name="Galleron N."/>
            <person name="Candelon B."/>
            <person name="Kapatral V."/>
            <person name="Bhattacharyya A."/>
            <person name="Reznik G."/>
            <person name="Mikhailova N."/>
            <person name="Lapidus A."/>
            <person name="Chu L."/>
            <person name="Mazur M."/>
            <person name="Goltsman E."/>
            <person name="Larsen N."/>
            <person name="D'Souza M."/>
            <person name="Walunas T."/>
            <person name="Grechkin Y."/>
            <person name="Pusch G."/>
            <person name="Haselkorn R."/>
            <person name="Fonstein M."/>
            <person name="Ehrlich S.D."/>
            <person name="Overbeek R."/>
            <person name="Kyrpides N.C."/>
        </authorList>
    </citation>
    <scope>NUCLEOTIDE SEQUENCE [LARGE SCALE GENOMIC DNA]</scope>
    <source>
        <strain>ATCC 14579 / DSM 31 / CCUG 7414 / JCM 2152 / NBRC 15305 / NCIMB 9373 / NCTC 2599 / NRRL B-3711</strain>
    </source>
</reference>
<keyword id="KW-0046">Antibiotic resistance</keyword>
<keyword id="KW-1003">Cell membrane</keyword>
<keyword id="KW-0133">Cell shape</keyword>
<keyword id="KW-0961">Cell wall biogenesis/degradation</keyword>
<keyword id="KW-0378">Hydrolase</keyword>
<keyword id="KW-0472">Membrane</keyword>
<keyword id="KW-0573">Peptidoglycan synthesis</keyword>
<keyword id="KW-1185">Reference proteome</keyword>
<keyword id="KW-0812">Transmembrane</keyword>
<keyword id="KW-1133">Transmembrane helix</keyword>
<evidence type="ECO:0000255" key="1">
    <source>
        <dbReference type="HAMAP-Rule" id="MF_01006"/>
    </source>
</evidence>
<accession>Q81G27</accession>
<feature type="chain" id="PRO_0000151092" description="Undecaprenyl-diphosphatase 2">
    <location>
        <begin position="1"/>
        <end position="263"/>
    </location>
</feature>
<feature type="transmembrane region" description="Helical" evidence="1">
    <location>
        <begin position="15"/>
        <end position="37"/>
    </location>
</feature>
<feature type="transmembrane region" description="Helical" evidence="1">
    <location>
        <begin position="42"/>
        <end position="62"/>
    </location>
</feature>
<feature type="transmembrane region" description="Helical" evidence="1">
    <location>
        <begin position="79"/>
        <end position="99"/>
    </location>
</feature>
<feature type="transmembrane region" description="Helical" evidence="1">
    <location>
        <begin position="107"/>
        <end position="127"/>
    </location>
</feature>
<feature type="transmembrane region" description="Helical" evidence="1">
    <location>
        <begin position="142"/>
        <end position="162"/>
    </location>
</feature>
<feature type="transmembrane region" description="Helical" evidence="1">
    <location>
        <begin position="183"/>
        <end position="203"/>
    </location>
</feature>
<feature type="transmembrane region" description="Helical" evidence="1">
    <location>
        <begin position="216"/>
        <end position="236"/>
    </location>
</feature>
<feature type="transmembrane region" description="Helical" evidence="1">
    <location>
        <begin position="242"/>
        <end position="262"/>
    </location>
</feature>
<name>UPPP2_BACCR</name>